<feature type="chain" id="PRO_0000158229" description="Histidine biosynthesis bifunctional protein HisB">
    <location>
        <begin position="1"/>
        <end position="375"/>
    </location>
</feature>
<feature type="region of interest" description="Histidinol-phosphatase" evidence="1">
    <location>
        <begin position="1"/>
        <end position="168"/>
    </location>
</feature>
<feature type="region of interest" description="Imidazoleglycerol-phosphate dehydratase" evidence="1">
    <location>
        <begin position="169"/>
        <end position="375"/>
    </location>
</feature>
<feature type="active site" description="Nucleophile" evidence="1">
    <location>
        <position position="8"/>
    </location>
</feature>
<feature type="active site" description="Proton donor" evidence="1">
    <location>
        <position position="10"/>
    </location>
</feature>
<feature type="binding site" evidence="1">
    <location>
        <position position="8"/>
    </location>
    <ligand>
        <name>Mg(2+)</name>
        <dbReference type="ChEBI" id="CHEBI:18420"/>
    </ligand>
</feature>
<feature type="binding site" evidence="1">
    <location>
        <position position="10"/>
    </location>
    <ligand>
        <name>Mg(2+)</name>
        <dbReference type="ChEBI" id="CHEBI:18420"/>
    </ligand>
</feature>
<feature type="binding site" evidence="1">
    <location>
        <position position="128"/>
    </location>
    <ligand>
        <name>Mg(2+)</name>
        <dbReference type="ChEBI" id="CHEBI:18420"/>
    </ligand>
</feature>
<organism>
    <name type="scientific">Xylella fastidiosa (strain 9a5c)</name>
    <dbReference type="NCBI Taxonomy" id="160492"/>
    <lineage>
        <taxon>Bacteria</taxon>
        <taxon>Pseudomonadati</taxon>
        <taxon>Pseudomonadota</taxon>
        <taxon>Gammaproteobacteria</taxon>
        <taxon>Lysobacterales</taxon>
        <taxon>Lysobacteraceae</taxon>
        <taxon>Xylella</taxon>
    </lineage>
</organism>
<gene>
    <name evidence="1" type="primary">hisB</name>
    <name type="ordered locus">XF_2217</name>
</gene>
<protein>
    <recommendedName>
        <fullName evidence="1">Histidine biosynthesis bifunctional protein HisB</fullName>
    </recommendedName>
    <domain>
        <recommendedName>
            <fullName evidence="1">Histidinol-phosphatase</fullName>
            <ecNumber evidence="1">3.1.3.15</ecNumber>
        </recommendedName>
    </domain>
    <domain>
        <recommendedName>
            <fullName evidence="1">Imidazoleglycerol-phosphate dehydratase</fullName>
            <shortName evidence="1">IGPD</shortName>
            <ecNumber evidence="1">4.2.1.19</ecNumber>
        </recommendedName>
    </domain>
</protein>
<sequence length="375" mass="41406">MTPIVFIDRDGTLIEEPPDFQIDAYEKLRLVNGVIPALLKLRDAGYHFVIVTNQDGLGSPAYPQASFDGPNALMLQIFSSQGIVFRDVLIDRSWPTDNAPTRKPGIGLMVAYLQDRDIDWARSAMVGDRPTDLQFAENLNIRGFQLRTPQFGGDWDWDGIAHTLADAPRRAVVQRHTKETTIRVEIDLDGAPQARITTGLPFFDHMLEQIAKHAGISLQISAVGDLHIDEHHTIEDTGLALGQAVRQALGDKRGIGRYGFDPPQLPWQVSGAAAHGGFTLPMDETQASAVLDFSGRPYCVFEGTFVRERVGDMPTELVPHFFRSLCDASGMNLHLSVHGDNDHHKVEACFKALARALRQALQRHGHVLPSTKGAL</sequence>
<keyword id="KW-0028">Amino-acid biosynthesis</keyword>
<keyword id="KW-0963">Cytoplasm</keyword>
<keyword id="KW-0368">Histidine biosynthesis</keyword>
<keyword id="KW-0378">Hydrolase</keyword>
<keyword id="KW-0456">Lyase</keyword>
<keyword id="KW-0460">Magnesium</keyword>
<keyword id="KW-0479">Metal-binding</keyword>
<keyword id="KW-0511">Multifunctional enzyme</keyword>
<comment type="catalytic activity">
    <reaction evidence="1">
        <text>D-erythro-1-(imidazol-4-yl)glycerol 3-phosphate = 3-(imidazol-4-yl)-2-oxopropyl phosphate + H2O</text>
        <dbReference type="Rhea" id="RHEA:11040"/>
        <dbReference type="ChEBI" id="CHEBI:15377"/>
        <dbReference type="ChEBI" id="CHEBI:57766"/>
        <dbReference type="ChEBI" id="CHEBI:58278"/>
        <dbReference type="EC" id="4.2.1.19"/>
    </reaction>
</comment>
<comment type="catalytic activity">
    <reaction evidence="1">
        <text>L-histidinol phosphate + H2O = L-histidinol + phosphate</text>
        <dbReference type="Rhea" id="RHEA:14465"/>
        <dbReference type="ChEBI" id="CHEBI:15377"/>
        <dbReference type="ChEBI" id="CHEBI:43474"/>
        <dbReference type="ChEBI" id="CHEBI:57699"/>
        <dbReference type="ChEBI" id="CHEBI:57980"/>
        <dbReference type="EC" id="3.1.3.15"/>
    </reaction>
</comment>
<comment type="cofactor">
    <cofactor evidence="1">
        <name>Mg(2+)</name>
        <dbReference type="ChEBI" id="CHEBI:18420"/>
    </cofactor>
</comment>
<comment type="pathway">
    <text evidence="1">Amino-acid biosynthesis; L-histidine biosynthesis; L-histidine from 5-phospho-alpha-D-ribose 1-diphosphate: step 6/9.</text>
</comment>
<comment type="pathway">
    <text evidence="1">Amino-acid biosynthesis; L-histidine biosynthesis; L-histidine from 5-phospho-alpha-D-ribose 1-diphosphate: step 8/9.</text>
</comment>
<comment type="subcellular location">
    <subcellularLocation>
        <location evidence="1">Cytoplasm</location>
    </subcellularLocation>
</comment>
<comment type="similarity">
    <text evidence="1">In the N-terminal section; belongs to the histidinol-phosphatase family.</text>
</comment>
<comment type="similarity">
    <text evidence="1">In the C-terminal section; belongs to the imidazoleglycerol-phosphate dehydratase family.</text>
</comment>
<proteinExistence type="inferred from homology"/>
<reference key="1">
    <citation type="journal article" date="2000" name="Nature">
        <title>The genome sequence of the plant pathogen Xylella fastidiosa.</title>
        <authorList>
            <person name="Simpson A.J.G."/>
            <person name="Reinach F.C."/>
            <person name="Arruda P."/>
            <person name="Abreu F.A."/>
            <person name="Acencio M."/>
            <person name="Alvarenga R."/>
            <person name="Alves L.M.C."/>
            <person name="Araya J.E."/>
            <person name="Baia G.S."/>
            <person name="Baptista C.S."/>
            <person name="Barros M.H."/>
            <person name="Bonaccorsi E.D."/>
            <person name="Bordin S."/>
            <person name="Bove J.M."/>
            <person name="Briones M.R.S."/>
            <person name="Bueno M.R.P."/>
            <person name="Camargo A.A."/>
            <person name="Camargo L.E.A."/>
            <person name="Carraro D.M."/>
            <person name="Carrer H."/>
            <person name="Colauto N.B."/>
            <person name="Colombo C."/>
            <person name="Costa F.F."/>
            <person name="Costa M.C.R."/>
            <person name="Costa-Neto C.M."/>
            <person name="Coutinho L.L."/>
            <person name="Cristofani M."/>
            <person name="Dias-Neto E."/>
            <person name="Docena C."/>
            <person name="El-Dorry H."/>
            <person name="Facincani A.P."/>
            <person name="Ferreira A.J.S."/>
            <person name="Ferreira V.C.A."/>
            <person name="Ferro J.A."/>
            <person name="Fraga J.S."/>
            <person name="Franca S.C."/>
            <person name="Franco M.C."/>
            <person name="Frohme M."/>
            <person name="Furlan L.R."/>
            <person name="Garnier M."/>
            <person name="Goldman G.H."/>
            <person name="Goldman M.H.S."/>
            <person name="Gomes S.L."/>
            <person name="Gruber A."/>
            <person name="Ho P.L."/>
            <person name="Hoheisel J.D."/>
            <person name="Junqueira M.L."/>
            <person name="Kemper E.L."/>
            <person name="Kitajima J.P."/>
            <person name="Krieger J.E."/>
            <person name="Kuramae E.E."/>
            <person name="Laigret F."/>
            <person name="Lambais M.R."/>
            <person name="Leite L.C.C."/>
            <person name="Lemos E.G.M."/>
            <person name="Lemos M.V.F."/>
            <person name="Lopes S.A."/>
            <person name="Lopes C.R."/>
            <person name="Machado J.A."/>
            <person name="Machado M.A."/>
            <person name="Madeira A.M.B.N."/>
            <person name="Madeira H.M.F."/>
            <person name="Marino C.L."/>
            <person name="Marques M.V."/>
            <person name="Martins E.A.L."/>
            <person name="Martins E.M.F."/>
            <person name="Matsukuma A.Y."/>
            <person name="Menck C.F.M."/>
            <person name="Miracca E.C."/>
            <person name="Miyaki C.Y."/>
            <person name="Monteiro-Vitorello C.B."/>
            <person name="Moon D.H."/>
            <person name="Nagai M.A."/>
            <person name="Nascimento A.L.T.O."/>
            <person name="Netto L.E.S."/>
            <person name="Nhani A. Jr."/>
            <person name="Nobrega F.G."/>
            <person name="Nunes L.R."/>
            <person name="Oliveira M.A."/>
            <person name="de Oliveira M.C."/>
            <person name="de Oliveira R.C."/>
            <person name="Palmieri D.A."/>
            <person name="Paris A."/>
            <person name="Peixoto B.R."/>
            <person name="Pereira G.A.G."/>
            <person name="Pereira H.A. Jr."/>
            <person name="Pesquero J.B."/>
            <person name="Quaggio R.B."/>
            <person name="Roberto P.G."/>
            <person name="Rodrigues V."/>
            <person name="de Rosa A.J.M."/>
            <person name="de Rosa V.E. Jr."/>
            <person name="de Sa R.G."/>
            <person name="Santelli R.V."/>
            <person name="Sawasaki H.E."/>
            <person name="da Silva A.C.R."/>
            <person name="da Silva A.M."/>
            <person name="da Silva F.R."/>
            <person name="Silva W.A. Jr."/>
            <person name="da Silveira J.F."/>
            <person name="Silvestri M.L.Z."/>
            <person name="Siqueira W.J."/>
            <person name="de Souza A.A."/>
            <person name="de Souza A.P."/>
            <person name="Terenzi M.F."/>
            <person name="Truffi D."/>
            <person name="Tsai S.M."/>
            <person name="Tsuhako M.H."/>
            <person name="Vallada H."/>
            <person name="Van Sluys M.A."/>
            <person name="Verjovski-Almeida S."/>
            <person name="Vettore A.L."/>
            <person name="Zago M.A."/>
            <person name="Zatz M."/>
            <person name="Meidanis J."/>
            <person name="Setubal J.C."/>
        </authorList>
    </citation>
    <scope>NUCLEOTIDE SEQUENCE [LARGE SCALE GENOMIC DNA]</scope>
    <source>
        <strain>9a5c</strain>
    </source>
</reference>
<name>HIS7_XYLFA</name>
<evidence type="ECO:0000255" key="1">
    <source>
        <dbReference type="HAMAP-Rule" id="MF_01022"/>
    </source>
</evidence>
<dbReference type="EC" id="3.1.3.15" evidence="1"/>
<dbReference type="EC" id="4.2.1.19" evidence="1"/>
<dbReference type="EMBL" id="AE003849">
    <property type="protein sequence ID" value="AAF85016.1"/>
    <property type="molecule type" value="Genomic_DNA"/>
</dbReference>
<dbReference type="PIR" id="D82585">
    <property type="entry name" value="D82585"/>
</dbReference>
<dbReference type="RefSeq" id="WP_010894665.1">
    <property type="nucleotide sequence ID" value="NC_002488.3"/>
</dbReference>
<dbReference type="SMR" id="Q9PBC7"/>
<dbReference type="STRING" id="160492.XF_2217"/>
<dbReference type="KEGG" id="xfa:XF_2217"/>
<dbReference type="eggNOG" id="COG0131">
    <property type="taxonomic scope" value="Bacteria"/>
</dbReference>
<dbReference type="eggNOG" id="COG0241">
    <property type="taxonomic scope" value="Bacteria"/>
</dbReference>
<dbReference type="HOGENOM" id="CLU_044308_0_0_6"/>
<dbReference type="UniPathway" id="UPA00031">
    <property type="reaction ID" value="UER00011"/>
</dbReference>
<dbReference type="UniPathway" id="UPA00031">
    <property type="reaction ID" value="UER00013"/>
</dbReference>
<dbReference type="Proteomes" id="UP000000812">
    <property type="component" value="Chromosome"/>
</dbReference>
<dbReference type="GO" id="GO:0005737">
    <property type="term" value="C:cytoplasm"/>
    <property type="evidence" value="ECO:0007669"/>
    <property type="project" value="UniProtKB-SubCell"/>
</dbReference>
<dbReference type="GO" id="GO:0004401">
    <property type="term" value="F:histidinol-phosphatase activity"/>
    <property type="evidence" value="ECO:0007669"/>
    <property type="project" value="UniProtKB-UniRule"/>
</dbReference>
<dbReference type="GO" id="GO:0004424">
    <property type="term" value="F:imidazoleglycerol-phosphate dehydratase activity"/>
    <property type="evidence" value="ECO:0007669"/>
    <property type="project" value="UniProtKB-UniRule"/>
</dbReference>
<dbReference type="GO" id="GO:0046872">
    <property type="term" value="F:metal ion binding"/>
    <property type="evidence" value="ECO:0007669"/>
    <property type="project" value="UniProtKB-KW"/>
</dbReference>
<dbReference type="GO" id="GO:0000105">
    <property type="term" value="P:L-histidine biosynthetic process"/>
    <property type="evidence" value="ECO:0007669"/>
    <property type="project" value="UniProtKB-UniRule"/>
</dbReference>
<dbReference type="CDD" id="cd07503">
    <property type="entry name" value="HAD_HisB-N"/>
    <property type="match status" value="1"/>
</dbReference>
<dbReference type="CDD" id="cd07914">
    <property type="entry name" value="IGPD"/>
    <property type="match status" value="1"/>
</dbReference>
<dbReference type="FunFam" id="3.30.230.40:FF:000001">
    <property type="entry name" value="Imidazoleglycerol-phosphate dehydratase HisB"/>
    <property type="match status" value="1"/>
</dbReference>
<dbReference type="FunFam" id="3.30.230.40:FF:000003">
    <property type="entry name" value="Imidazoleglycerol-phosphate dehydratase HisB"/>
    <property type="match status" value="1"/>
</dbReference>
<dbReference type="Gene3D" id="3.40.50.1000">
    <property type="entry name" value="HAD superfamily/HAD-like"/>
    <property type="match status" value="1"/>
</dbReference>
<dbReference type="Gene3D" id="3.30.230.40">
    <property type="entry name" value="Imidazole glycerol phosphate dehydratase, domain 1"/>
    <property type="match status" value="2"/>
</dbReference>
<dbReference type="HAMAP" id="MF_01022">
    <property type="entry name" value="Bifunc_HisB"/>
    <property type="match status" value="1"/>
</dbReference>
<dbReference type="HAMAP" id="MF_00076">
    <property type="entry name" value="HisB"/>
    <property type="match status" value="1"/>
</dbReference>
<dbReference type="InterPro" id="IPR036412">
    <property type="entry name" value="HAD-like_sf"/>
</dbReference>
<dbReference type="InterPro" id="IPR006549">
    <property type="entry name" value="HAD-SF_hydro_IIIA"/>
</dbReference>
<dbReference type="InterPro" id="IPR023214">
    <property type="entry name" value="HAD_sf"/>
</dbReference>
<dbReference type="InterPro" id="IPR020566">
    <property type="entry name" value="His_synth_bifunc_HisB"/>
</dbReference>
<dbReference type="InterPro" id="IPR005954">
    <property type="entry name" value="HisB_N"/>
</dbReference>
<dbReference type="InterPro" id="IPR006543">
    <property type="entry name" value="Histidinol-phos"/>
</dbReference>
<dbReference type="InterPro" id="IPR038494">
    <property type="entry name" value="IGPD_sf"/>
</dbReference>
<dbReference type="InterPro" id="IPR000807">
    <property type="entry name" value="ImidazoleglycerolP_deHydtase"/>
</dbReference>
<dbReference type="InterPro" id="IPR020565">
    <property type="entry name" value="ImidazoleglycerP_deHydtase_CS"/>
</dbReference>
<dbReference type="InterPro" id="IPR020568">
    <property type="entry name" value="Ribosomal_Su5_D2-typ_SF"/>
</dbReference>
<dbReference type="NCBIfam" id="TIGR01662">
    <property type="entry name" value="HAD-SF-IIIA"/>
    <property type="match status" value="1"/>
</dbReference>
<dbReference type="NCBIfam" id="TIGR01261">
    <property type="entry name" value="hisB_Nterm"/>
    <property type="match status" value="1"/>
</dbReference>
<dbReference type="NCBIfam" id="TIGR01656">
    <property type="entry name" value="Histidinol-ppas"/>
    <property type="match status" value="1"/>
</dbReference>
<dbReference type="NCBIfam" id="NF003937">
    <property type="entry name" value="PRK05446.1"/>
    <property type="match status" value="1"/>
</dbReference>
<dbReference type="PANTHER" id="PTHR23133:SF2">
    <property type="entry name" value="IMIDAZOLEGLYCEROL-PHOSPHATE DEHYDRATASE"/>
    <property type="match status" value="1"/>
</dbReference>
<dbReference type="PANTHER" id="PTHR23133">
    <property type="entry name" value="IMIDAZOLEGLYCEROL-PHOSPHATE DEHYDRATASE HIS7"/>
    <property type="match status" value="1"/>
</dbReference>
<dbReference type="Pfam" id="PF13242">
    <property type="entry name" value="Hydrolase_like"/>
    <property type="match status" value="1"/>
</dbReference>
<dbReference type="Pfam" id="PF00475">
    <property type="entry name" value="IGPD"/>
    <property type="match status" value="1"/>
</dbReference>
<dbReference type="SUPFAM" id="SSF56784">
    <property type="entry name" value="HAD-like"/>
    <property type="match status" value="1"/>
</dbReference>
<dbReference type="SUPFAM" id="SSF54211">
    <property type="entry name" value="Ribosomal protein S5 domain 2-like"/>
    <property type="match status" value="2"/>
</dbReference>
<dbReference type="PROSITE" id="PS00954">
    <property type="entry name" value="IGP_DEHYDRATASE_1"/>
    <property type="match status" value="1"/>
</dbReference>
<dbReference type="PROSITE" id="PS00955">
    <property type="entry name" value="IGP_DEHYDRATASE_2"/>
    <property type="match status" value="1"/>
</dbReference>
<accession>Q9PBC7</accession>